<proteinExistence type="inferred from homology"/>
<sequence length="251" mass="28571">MTVSINEVSKYFWKQTGTVQVLENINFQLEKGDFVTVIGPSGCGKSTLLKIVAGLDNDFEGEIIIDGERITKPSKKQGFIFQEHRLFPWLTVEENIAADLSLKDKYVKDKVKEWVEIVRLDGFEKSYPKEISGGMSQRVAIARALLRDPSVLLLDEPFGALDAFTRSHLQEVLLNIWEQKKTTMIFVTHDIDEAIYLSNRIVIMSAKPGEIHKVIENNLSYPRNKTSQSFQQLRTKVLQQFEHGGLIQTSI</sequence>
<evidence type="ECO:0000255" key="1">
    <source>
        <dbReference type="HAMAP-Rule" id="MF_01724"/>
    </source>
</evidence>
<evidence type="ECO:0000305" key="2"/>
<accession>Q81P94</accession>
<accession>Q6HXG6</accession>
<accession>Q6KRI4</accession>
<gene>
    <name evidence="1" type="primary">ssuB</name>
    <name type="ordered locus">BA_2922</name>
    <name type="ordered locus">GBAA_2922</name>
    <name type="ordered locus">BAS2714</name>
</gene>
<reference key="1">
    <citation type="journal article" date="2003" name="Nature">
        <title>The genome sequence of Bacillus anthracis Ames and comparison to closely related bacteria.</title>
        <authorList>
            <person name="Read T.D."/>
            <person name="Peterson S.N."/>
            <person name="Tourasse N.J."/>
            <person name="Baillie L.W."/>
            <person name="Paulsen I.T."/>
            <person name="Nelson K.E."/>
            <person name="Tettelin H."/>
            <person name="Fouts D.E."/>
            <person name="Eisen J.A."/>
            <person name="Gill S.R."/>
            <person name="Holtzapple E.K."/>
            <person name="Okstad O.A."/>
            <person name="Helgason E."/>
            <person name="Rilstone J."/>
            <person name="Wu M."/>
            <person name="Kolonay J.F."/>
            <person name="Beanan M.J."/>
            <person name="Dodson R.J."/>
            <person name="Brinkac L.M."/>
            <person name="Gwinn M.L."/>
            <person name="DeBoy R.T."/>
            <person name="Madpu R."/>
            <person name="Daugherty S.C."/>
            <person name="Durkin A.S."/>
            <person name="Haft D.H."/>
            <person name="Nelson W.C."/>
            <person name="Peterson J.D."/>
            <person name="Pop M."/>
            <person name="Khouri H.M."/>
            <person name="Radune D."/>
            <person name="Benton J.L."/>
            <person name="Mahamoud Y."/>
            <person name="Jiang L."/>
            <person name="Hance I.R."/>
            <person name="Weidman J.F."/>
            <person name="Berry K.J."/>
            <person name="Plaut R.D."/>
            <person name="Wolf A.M."/>
            <person name="Watkins K.L."/>
            <person name="Nierman W.C."/>
            <person name="Hazen A."/>
            <person name="Cline R.T."/>
            <person name="Redmond C."/>
            <person name="Thwaite J.E."/>
            <person name="White O."/>
            <person name="Salzberg S.L."/>
            <person name="Thomason B."/>
            <person name="Friedlander A.M."/>
            <person name="Koehler T.M."/>
            <person name="Hanna P.C."/>
            <person name="Kolstoe A.-B."/>
            <person name="Fraser C.M."/>
        </authorList>
    </citation>
    <scope>NUCLEOTIDE SEQUENCE [LARGE SCALE GENOMIC DNA]</scope>
    <source>
        <strain>Ames / isolate Porton</strain>
    </source>
</reference>
<reference key="2">
    <citation type="journal article" date="2009" name="J. Bacteriol.">
        <title>The complete genome sequence of Bacillus anthracis Ames 'Ancestor'.</title>
        <authorList>
            <person name="Ravel J."/>
            <person name="Jiang L."/>
            <person name="Stanley S.T."/>
            <person name="Wilson M.R."/>
            <person name="Decker R.S."/>
            <person name="Read T.D."/>
            <person name="Worsham P."/>
            <person name="Keim P.S."/>
            <person name="Salzberg S.L."/>
            <person name="Fraser-Liggett C.M."/>
            <person name="Rasko D.A."/>
        </authorList>
    </citation>
    <scope>NUCLEOTIDE SEQUENCE [LARGE SCALE GENOMIC DNA]</scope>
    <source>
        <strain>Ames ancestor</strain>
    </source>
</reference>
<reference key="3">
    <citation type="submission" date="2004-01" db="EMBL/GenBank/DDBJ databases">
        <title>Complete genome sequence of Bacillus anthracis Sterne.</title>
        <authorList>
            <person name="Brettin T.S."/>
            <person name="Bruce D."/>
            <person name="Challacombe J.F."/>
            <person name="Gilna P."/>
            <person name="Han C."/>
            <person name="Hill K."/>
            <person name="Hitchcock P."/>
            <person name="Jackson P."/>
            <person name="Keim P."/>
            <person name="Longmire J."/>
            <person name="Lucas S."/>
            <person name="Okinaka R."/>
            <person name="Richardson P."/>
            <person name="Rubin E."/>
            <person name="Tice H."/>
        </authorList>
    </citation>
    <scope>NUCLEOTIDE SEQUENCE [LARGE SCALE GENOMIC DNA]</scope>
    <source>
        <strain>Sterne</strain>
    </source>
</reference>
<protein>
    <recommendedName>
        <fullName evidence="1">Aliphatic sulfonates import ATP-binding protein SsuB</fullName>
        <ecNumber evidence="1">7.6.2.14</ecNumber>
    </recommendedName>
</protein>
<organism>
    <name type="scientific">Bacillus anthracis</name>
    <dbReference type="NCBI Taxonomy" id="1392"/>
    <lineage>
        <taxon>Bacteria</taxon>
        <taxon>Bacillati</taxon>
        <taxon>Bacillota</taxon>
        <taxon>Bacilli</taxon>
        <taxon>Bacillales</taxon>
        <taxon>Bacillaceae</taxon>
        <taxon>Bacillus</taxon>
        <taxon>Bacillus cereus group</taxon>
    </lineage>
</organism>
<comment type="function">
    <text evidence="1">Part of the ABC transporter complex SsuABC involved in aliphatic sulfonates import. Responsible for energy coupling to the transport system.</text>
</comment>
<comment type="catalytic activity">
    <reaction evidence="1">
        <text>ATP + H2O + aliphatic sulfonate-[sulfonate-binding protein]Side 1 = ADP + phosphate + aliphatic sulfonateSide 2 + [sulfonate-binding protein]Side 1.</text>
        <dbReference type="EC" id="7.6.2.14"/>
    </reaction>
</comment>
<comment type="subunit">
    <text evidence="1">The complex is composed of two ATP-binding proteins (SsuB), two transmembrane proteins (SsuC) and a solute-binding protein (SsuA).</text>
</comment>
<comment type="subcellular location">
    <subcellularLocation>
        <location evidence="1">Cell membrane</location>
        <topology evidence="1">Peripheral membrane protein</topology>
    </subcellularLocation>
</comment>
<comment type="similarity">
    <text evidence="1">Belongs to the ABC transporter superfamily. Aliphatic sulfonates importer (TC 3.A.1.17.2) family.</text>
</comment>
<comment type="sequence caution" evidence="2">
    <conflict type="erroneous initiation">
        <sequence resource="EMBL-CDS" id="AAT55023"/>
    </conflict>
</comment>
<feature type="chain" id="PRO_0000279884" description="Aliphatic sulfonates import ATP-binding protein SsuB">
    <location>
        <begin position="1"/>
        <end position="251"/>
    </location>
</feature>
<feature type="domain" description="ABC transporter" evidence="1">
    <location>
        <begin position="3"/>
        <end position="231"/>
    </location>
</feature>
<feature type="binding site" evidence="1">
    <location>
        <begin position="39"/>
        <end position="46"/>
    </location>
    <ligand>
        <name>ATP</name>
        <dbReference type="ChEBI" id="CHEBI:30616"/>
    </ligand>
</feature>
<dbReference type="EC" id="7.6.2.14" evidence="1"/>
<dbReference type="EMBL" id="AE017334">
    <property type="protein sequence ID" value="AAT32039.1"/>
    <property type="molecule type" value="Genomic_DNA"/>
</dbReference>
<dbReference type="EMBL" id="AE016879">
    <property type="protein sequence ID" value="AAP26744.1"/>
    <property type="molecule type" value="Genomic_DNA"/>
</dbReference>
<dbReference type="EMBL" id="AE017225">
    <property type="protein sequence ID" value="AAT55023.1"/>
    <property type="status" value="ALT_INIT"/>
    <property type="molecule type" value="Genomic_DNA"/>
</dbReference>
<dbReference type="RefSeq" id="NP_845258.1">
    <property type="nucleotide sequence ID" value="NC_003997.3"/>
</dbReference>
<dbReference type="RefSeq" id="WP_000218630.1">
    <property type="nucleotide sequence ID" value="NZ_WXXJ01000007.1"/>
</dbReference>
<dbReference type="SMR" id="Q81P94"/>
<dbReference type="STRING" id="261594.GBAA_2922"/>
<dbReference type="DNASU" id="1088446"/>
<dbReference type="GeneID" id="45022741"/>
<dbReference type="KEGG" id="ban:BA_2922"/>
<dbReference type="KEGG" id="banh:HYU01_14470"/>
<dbReference type="KEGG" id="bar:GBAA_2922"/>
<dbReference type="KEGG" id="bat:BAS2714"/>
<dbReference type="PATRIC" id="fig|198094.11.peg.2902"/>
<dbReference type="eggNOG" id="COG1116">
    <property type="taxonomic scope" value="Bacteria"/>
</dbReference>
<dbReference type="HOGENOM" id="CLU_000604_1_22_9"/>
<dbReference type="OMA" id="QQGFIFQ"/>
<dbReference type="OrthoDB" id="9802264at2"/>
<dbReference type="Proteomes" id="UP000000427">
    <property type="component" value="Chromosome"/>
</dbReference>
<dbReference type="Proteomes" id="UP000000594">
    <property type="component" value="Chromosome"/>
</dbReference>
<dbReference type="GO" id="GO:0005886">
    <property type="term" value="C:plasma membrane"/>
    <property type="evidence" value="ECO:0007669"/>
    <property type="project" value="UniProtKB-SubCell"/>
</dbReference>
<dbReference type="GO" id="GO:0005524">
    <property type="term" value="F:ATP binding"/>
    <property type="evidence" value="ECO:0007669"/>
    <property type="project" value="UniProtKB-KW"/>
</dbReference>
<dbReference type="GO" id="GO:0016887">
    <property type="term" value="F:ATP hydrolysis activity"/>
    <property type="evidence" value="ECO:0007669"/>
    <property type="project" value="InterPro"/>
</dbReference>
<dbReference type="CDD" id="cd03293">
    <property type="entry name" value="ABC_NrtD_SsuB_transporters"/>
    <property type="match status" value="1"/>
</dbReference>
<dbReference type="FunFam" id="3.40.50.300:FF:001273">
    <property type="entry name" value="Aliphatic sulfonates import ATP-binding protein SsuB"/>
    <property type="match status" value="1"/>
</dbReference>
<dbReference type="Gene3D" id="3.40.50.300">
    <property type="entry name" value="P-loop containing nucleotide triphosphate hydrolases"/>
    <property type="match status" value="1"/>
</dbReference>
<dbReference type="InterPro" id="IPR003593">
    <property type="entry name" value="AAA+_ATPase"/>
</dbReference>
<dbReference type="InterPro" id="IPR003439">
    <property type="entry name" value="ABC_transporter-like_ATP-bd"/>
</dbReference>
<dbReference type="InterPro" id="IPR017871">
    <property type="entry name" value="ABC_transporter-like_CS"/>
</dbReference>
<dbReference type="InterPro" id="IPR050166">
    <property type="entry name" value="ABC_transporter_ATP-bind"/>
</dbReference>
<dbReference type="InterPro" id="IPR027417">
    <property type="entry name" value="P-loop_NTPase"/>
</dbReference>
<dbReference type="PANTHER" id="PTHR42788:SF13">
    <property type="entry name" value="ALIPHATIC SULFONATES IMPORT ATP-BINDING PROTEIN SSUB"/>
    <property type="match status" value="1"/>
</dbReference>
<dbReference type="PANTHER" id="PTHR42788">
    <property type="entry name" value="TAURINE IMPORT ATP-BINDING PROTEIN-RELATED"/>
    <property type="match status" value="1"/>
</dbReference>
<dbReference type="Pfam" id="PF00005">
    <property type="entry name" value="ABC_tran"/>
    <property type="match status" value="1"/>
</dbReference>
<dbReference type="SMART" id="SM00382">
    <property type="entry name" value="AAA"/>
    <property type="match status" value="1"/>
</dbReference>
<dbReference type="SUPFAM" id="SSF52540">
    <property type="entry name" value="P-loop containing nucleoside triphosphate hydrolases"/>
    <property type="match status" value="1"/>
</dbReference>
<dbReference type="PROSITE" id="PS00211">
    <property type="entry name" value="ABC_TRANSPORTER_1"/>
    <property type="match status" value="1"/>
</dbReference>
<dbReference type="PROSITE" id="PS50893">
    <property type="entry name" value="ABC_TRANSPORTER_2"/>
    <property type="match status" value="1"/>
</dbReference>
<dbReference type="PROSITE" id="PS51291">
    <property type="entry name" value="SSUB"/>
    <property type="match status" value="1"/>
</dbReference>
<name>SSUB_BACAN</name>
<keyword id="KW-0067">ATP-binding</keyword>
<keyword id="KW-1003">Cell membrane</keyword>
<keyword id="KW-0472">Membrane</keyword>
<keyword id="KW-0547">Nucleotide-binding</keyword>
<keyword id="KW-1185">Reference proteome</keyword>
<keyword id="KW-1278">Translocase</keyword>
<keyword id="KW-0813">Transport</keyword>